<keyword id="KW-0067">ATP-binding</keyword>
<keyword id="KW-0173">Coenzyme A biosynthesis</keyword>
<keyword id="KW-0963">Cytoplasm</keyword>
<keyword id="KW-0418">Kinase</keyword>
<keyword id="KW-0547">Nucleotide-binding</keyword>
<keyword id="KW-1185">Reference proteome</keyword>
<keyword id="KW-0808">Transferase</keyword>
<accession>Q5GT26</accession>
<reference key="1">
    <citation type="journal article" date="2005" name="PLoS Biol.">
        <title>The Wolbachia genome of Brugia malayi: endosymbiont evolution within a human pathogenic nematode.</title>
        <authorList>
            <person name="Foster J."/>
            <person name="Ganatra M."/>
            <person name="Kamal I."/>
            <person name="Ware J."/>
            <person name="Makarova K."/>
            <person name="Ivanova N."/>
            <person name="Bhattacharyya A."/>
            <person name="Kapatral V."/>
            <person name="Kumar S."/>
            <person name="Posfai J."/>
            <person name="Vincze T."/>
            <person name="Ingram J."/>
            <person name="Moran L."/>
            <person name="Lapidus A."/>
            <person name="Omelchenko M."/>
            <person name="Kyrpides N."/>
            <person name="Ghedin E."/>
            <person name="Wang S."/>
            <person name="Goltsman E."/>
            <person name="Joukov V."/>
            <person name="Ostrovskaya O."/>
            <person name="Tsukerman K."/>
            <person name="Mazur M."/>
            <person name="Comb D."/>
            <person name="Koonin E."/>
            <person name="Slatko B."/>
        </authorList>
    </citation>
    <scope>NUCLEOTIDE SEQUENCE [LARGE SCALE GENOMIC DNA]</scope>
    <source>
        <strain>TRS</strain>
    </source>
</reference>
<comment type="function">
    <text evidence="1">Catalyzes the phosphorylation of the 3'-hydroxyl group of dephosphocoenzyme A to form coenzyme A.</text>
</comment>
<comment type="catalytic activity">
    <reaction evidence="1">
        <text>3'-dephospho-CoA + ATP = ADP + CoA + H(+)</text>
        <dbReference type="Rhea" id="RHEA:18245"/>
        <dbReference type="ChEBI" id="CHEBI:15378"/>
        <dbReference type="ChEBI" id="CHEBI:30616"/>
        <dbReference type="ChEBI" id="CHEBI:57287"/>
        <dbReference type="ChEBI" id="CHEBI:57328"/>
        <dbReference type="ChEBI" id="CHEBI:456216"/>
        <dbReference type="EC" id="2.7.1.24"/>
    </reaction>
</comment>
<comment type="pathway">
    <text evidence="1">Cofactor biosynthesis; coenzyme A biosynthesis; CoA from (R)-pantothenate: step 5/5.</text>
</comment>
<comment type="subcellular location">
    <subcellularLocation>
        <location evidence="1">Cytoplasm</location>
    </subcellularLocation>
</comment>
<comment type="similarity">
    <text evidence="1">Belongs to the CoaE family.</text>
</comment>
<organism>
    <name type="scientific">Wolbachia sp. subsp. Brugia malayi (strain TRS)</name>
    <dbReference type="NCBI Taxonomy" id="292805"/>
    <lineage>
        <taxon>Bacteria</taxon>
        <taxon>Pseudomonadati</taxon>
        <taxon>Pseudomonadota</taxon>
        <taxon>Alphaproteobacteria</taxon>
        <taxon>Rickettsiales</taxon>
        <taxon>Anaplasmataceae</taxon>
        <taxon>Wolbachieae</taxon>
        <taxon>Wolbachia</taxon>
    </lineage>
</organism>
<dbReference type="EC" id="2.7.1.24" evidence="1"/>
<dbReference type="EMBL" id="AE017321">
    <property type="protein sequence ID" value="AAW70848.1"/>
    <property type="molecule type" value="Genomic_DNA"/>
</dbReference>
<dbReference type="RefSeq" id="WP_011256458.1">
    <property type="nucleotide sequence ID" value="NC_006833.1"/>
</dbReference>
<dbReference type="SMR" id="Q5GT26"/>
<dbReference type="STRING" id="292805.Wbm0259"/>
<dbReference type="KEGG" id="wbm:Wbm0259"/>
<dbReference type="eggNOG" id="COG0237">
    <property type="taxonomic scope" value="Bacteria"/>
</dbReference>
<dbReference type="HOGENOM" id="CLU_057180_3_0_5"/>
<dbReference type="UniPathway" id="UPA00241">
    <property type="reaction ID" value="UER00356"/>
</dbReference>
<dbReference type="Proteomes" id="UP000000534">
    <property type="component" value="Chromosome"/>
</dbReference>
<dbReference type="GO" id="GO:0005737">
    <property type="term" value="C:cytoplasm"/>
    <property type="evidence" value="ECO:0007669"/>
    <property type="project" value="UniProtKB-SubCell"/>
</dbReference>
<dbReference type="GO" id="GO:0005524">
    <property type="term" value="F:ATP binding"/>
    <property type="evidence" value="ECO:0007669"/>
    <property type="project" value="UniProtKB-UniRule"/>
</dbReference>
<dbReference type="GO" id="GO:0004140">
    <property type="term" value="F:dephospho-CoA kinase activity"/>
    <property type="evidence" value="ECO:0007669"/>
    <property type="project" value="UniProtKB-UniRule"/>
</dbReference>
<dbReference type="GO" id="GO:0015937">
    <property type="term" value="P:coenzyme A biosynthetic process"/>
    <property type="evidence" value="ECO:0007669"/>
    <property type="project" value="UniProtKB-UniRule"/>
</dbReference>
<dbReference type="CDD" id="cd02022">
    <property type="entry name" value="DPCK"/>
    <property type="match status" value="1"/>
</dbReference>
<dbReference type="Gene3D" id="3.40.50.300">
    <property type="entry name" value="P-loop containing nucleotide triphosphate hydrolases"/>
    <property type="match status" value="1"/>
</dbReference>
<dbReference type="HAMAP" id="MF_00376">
    <property type="entry name" value="Dephospho_CoA_kinase"/>
    <property type="match status" value="1"/>
</dbReference>
<dbReference type="InterPro" id="IPR001977">
    <property type="entry name" value="Depp_CoAkinase"/>
</dbReference>
<dbReference type="InterPro" id="IPR027417">
    <property type="entry name" value="P-loop_NTPase"/>
</dbReference>
<dbReference type="NCBIfam" id="TIGR00152">
    <property type="entry name" value="dephospho-CoA kinase"/>
    <property type="match status" value="1"/>
</dbReference>
<dbReference type="PANTHER" id="PTHR10695:SF46">
    <property type="entry name" value="BIFUNCTIONAL COENZYME A SYNTHASE-RELATED"/>
    <property type="match status" value="1"/>
</dbReference>
<dbReference type="PANTHER" id="PTHR10695">
    <property type="entry name" value="DEPHOSPHO-COA KINASE-RELATED"/>
    <property type="match status" value="1"/>
</dbReference>
<dbReference type="Pfam" id="PF01121">
    <property type="entry name" value="CoaE"/>
    <property type="match status" value="1"/>
</dbReference>
<dbReference type="SUPFAM" id="SSF52540">
    <property type="entry name" value="P-loop containing nucleoside triphosphate hydrolases"/>
    <property type="match status" value="1"/>
</dbReference>
<dbReference type="PROSITE" id="PS51219">
    <property type="entry name" value="DPCK"/>
    <property type="match status" value="1"/>
</dbReference>
<evidence type="ECO:0000255" key="1">
    <source>
        <dbReference type="HAMAP-Rule" id="MF_00376"/>
    </source>
</evidence>
<protein>
    <recommendedName>
        <fullName evidence="1">Dephospho-CoA kinase</fullName>
        <ecNumber evidence="1">2.7.1.24</ecNumber>
    </recommendedName>
    <alternativeName>
        <fullName evidence="1">Dephosphocoenzyme A kinase</fullName>
    </alternativeName>
</protein>
<feature type="chain" id="PRO_0000243363" description="Dephospho-CoA kinase">
    <location>
        <begin position="1"/>
        <end position="195"/>
    </location>
</feature>
<feature type="domain" description="DPCK" evidence="1">
    <location>
        <begin position="2"/>
        <end position="195"/>
    </location>
</feature>
<feature type="binding site" evidence="1">
    <location>
        <begin position="10"/>
        <end position="15"/>
    </location>
    <ligand>
        <name>ATP</name>
        <dbReference type="ChEBI" id="CHEBI:30616"/>
    </ligand>
</feature>
<name>COAE_WOLTR</name>
<gene>
    <name evidence="1" type="primary">coaE</name>
    <name type="ordered locus">Wbm0259</name>
</gene>
<proteinExistence type="inferred from homology"/>
<sequence>MIIGLTGGIGVGKSFIANCFKEFGAAVFDADFIVHQLYRVDKNIISYAEKNFPGAIANGEIDKTVLSKYFLDYDENWKQFQSLVHSAVQNELEIFIAQDKEINRKLLVLDVPLLLETRFHLYCDFIIFIYADSAAQAQRLSERNIDKEKLDLISSIQLPVKEKRQMSDFTIDTSTSKEHVLSQVKDIVDSLSLSS</sequence>